<proteinExistence type="inferred from homology"/>
<comment type="function">
    <text evidence="1">Located on the platform of the 30S subunit, it bridges several disparate RNA helices of the 16S rRNA. Forms part of the Shine-Dalgarno cleft in the 70S ribosome.</text>
</comment>
<comment type="subunit">
    <text evidence="1">Part of the 30S ribosomal subunit. Interacts with proteins S7 and S18. Binds to IF-3.</text>
</comment>
<comment type="similarity">
    <text evidence="1">Belongs to the universal ribosomal protein uS11 family.</text>
</comment>
<sequence>MAGRTTRKRRVKKNIESGVAHIHSTFNNTIVMITDAQGNAVAWSSAGALGFKGSRKSTPFAAQMAAEAAAKSAMEINMRTVAVTVKGPGSGRESAIRALAAAGLEVTSIKDVTPVPHNGSRPPKRRRV</sequence>
<protein>
    <recommendedName>
        <fullName evidence="1">Small ribosomal subunit protein uS11</fullName>
    </recommendedName>
    <alternativeName>
        <fullName evidence="2">30S ribosomal protein S11</fullName>
    </alternativeName>
</protein>
<feature type="chain" id="PRO_0000294784" description="Small ribosomal subunit protein uS11">
    <location>
        <begin position="1"/>
        <end position="128"/>
    </location>
</feature>
<organism>
    <name type="scientific">Leuconostoc mesenteroides subsp. mesenteroides (strain ATCC 8293 / DSM 20343 / BCRC 11652 / CCM 1803 / JCM 6124 / NCDO 523 / NBRC 100496 / NCIMB 8023 / NCTC 12954 / NRRL B-1118 / 37Y)</name>
    <dbReference type="NCBI Taxonomy" id="203120"/>
    <lineage>
        <taxon>Bacteria</taxon>
        <taxon>Bacillati</taxon>
        <taxon>Bacillota</taxon>
        <taxon>Bacilli</taxon>
        <taxon>Lactobacillales</taxon>
        <taxon>Lactobacillaceae</taxon>
        <taxon>Leuconostoc</taxon>
    </lineage>
</organism>
<keyword id="KW-1185">Reference proteome</keyword>
<keyword id="KW-0687">Ribonucleoprotein</keyword>
<keyword id="KW-0689">Ribosomal protein</keyword>
<keyword id="KW-0694">RNA-binding</keyword>
<keyword id="KW-0699">rRNA-binding</keyword>
<accession>Q03ZM1</accession>
<dbReference type="EMBL" id="CP000414">
    <property type="protein sequence ID" value="ABJ61351.1"/>
    <property type="molecule type" value="Genomic_DNA"/>
</dbReference>
<dbReference type="RefSeq" id="WP_011679137.1">
    <property type="nucleotide sequence ID" value="NC_008531.1"/>
</dbReference>
<dbReference type="SMR" id="Q03ZM1"/>
<dbReference type="EnsemblBacteria" id="ABJ61351">
    <property type="protein sequence ID" value="ABJ61351"/>
    <property type="gene ID" value="LEUM_0220"/>
</dbReference>
<dbReference type="GeneID" id="97504957"/>
<dbReference type="KEGG" id="lme:LEUM_0220"/>
<dbReference type="eggNOG" id="COG0100">
    <property type="taxonomic scope" value="Bacteria"/>
</dbReference>
<dbReference type="HOGENOM" id="CLU_072439_5_0_9"/>
<dbReference type="Proteomes" id="UP000000362">
    <property type="component" value="Chromosome"/>
</dbReference>
<dbReference type="GO" id="GO:1990904">
    <property type="term" value="C:ribonucleoprotein complex"/>
    <property type="evidence" value="ECO:0007669"/>
    <property type="project" value="UniProtKB-KW"/>
</dbReference>
<dbReference type="GO" id="GO:0005840">
    <property type="term" value="C:ribosome"/>
    <property type="evidence" value="ECO:0007669"/>
    <property type="project" value="UniProtKB-KW"/>
</dbReference>
<dbReference type="GO" id="GO:0019843">
    <property type="term" value="F:rRNA binding"/>
    <property type="evidence" value="ECO:0007669"/>
    <property type="project" value="UniProtKB-UniRule"/>
</dbReference>
<dbReference type="GO" id="GO:0003735">
    <property type="term" value="F:structural constituent of ribosome"/>
    <property type="evidence" value="ECO:0007669"/>
    <property type="project" value="InterPro"/>
</dbReference>
<dbReference type="GO" id="GO:0006412">
    <property type="term" value="P:translation"/>
    <property type="evidence" value="ECO:0007669"/>
    <property type="project" value="UniProtKB-UniRule"/>
</dbReference>
<dbReference type="FunFam" id="3.30.420.80:FF:000001">
    <property type="entry name" value="30S ribosomal protein S11"/>
    <property type="match status" value="1"/>
</dbReference>
<dbReference type="Gene3D" id="3.30.420.80">
    <property type="entry name" value="Ribosomal protein S11"/>
    <property type="match status" value="1"/>
</dbReference>
<dbReference type="HAMAP" id="MF_01310">
    <property type="entry name" value="Ribosomal_uS11"/>
    <property type="match status" value="1"/>
</dbReference>
<dbReference type="InterPro" id="IPR001971">
    <property type="entry name" value="Ribosomal_uS11"/>
</dbReference>
<dbReference type="InterPro" id="IPR019981">
    <property type="entry name" value="Ribosomal_uS11_bac-type"/>
</dbReference>
<dbReference type="InterPro" id="IPR018102">
    <property type="entry name" value="Ribosomal_uS11_CS"/>
</dbReference>
<dbReference type="InterPro" id="IPR036967">
    <property type="entry name" value="Ribosomal_uS11_sf"/>
</dbReference>
<dbReference type="NCBIfam" id="NF003698">
    <property type="entry name" value="PRK05309.1"/>
    <property type="match status" value="1"/>
</dbReference>
<dbReference type="NCBIfam" id="TIGR03632">
    <property type="entry name" value="uS11_bact"/>
    <property type="match status" value="1"/>
</dbReference>
<dbReference type="PANTHER" id="PTHR11759">
    <property type="entry name" value="40S RIBOSOMAL PROTEIN S14/30S RIBOSOMAL PROTEIN S11"/>
    <property type="match status" value="1"/>
</dbReference>
<dbReference type="Pfam" id="PF00411">
    <property type="entry name" value="Ribosomal_S11"/>
    <property type="match status" value="1"/>
</dbReference>
<dbReference type="PIRSF" id="PIRSF002131">
    <property type="entry name" value="Ribosomal_S11"/>
    <property type="match status" value="1"/>
</dbReference>
<dbReference type="SUPFAM" id="SSF53137">
    <property type="entry name" value="Translational machinery components"/>
    <property type="match status" value="1"/>
</dbReference>
<dbReference type="PROSITE" id="PS00054">
    <property type="entry name" value="RIBOSOMAL_S11"/>
    <property type="match status" value="1"/>
</dbReference>
<gene>
    <name evidence="1" type="primary">rpsK</name>
    <name type="ordered locus">LEUM_0220</name>
</gene>
<evidence type="ECO:0000255" key="1">
    <source>
        <dbReference type="HAMAP-Rule" id="MF_01310"/>
    </source>
</evidence>
<evidence type="ECO:0000305" key="2"/>
<reference key="1">
    <citation type="journal article" date="2006" name="Proc. Natl. Acad. Sci. U.S.A.">
        <title>Comparative genomics of the lactic acid bacteria.</title>
        <authorList>
            <person name="Makarova K.S."/>
            <person name="Slesarev A."/>
            <person name="Wolf Y.I."/>
            <person name="Sorokin A."/>
            <person name="Mirkin B."/>
            <person name="Koonin E.V."/>
            <person name="Pavlov A."/>
            <person name="Pavlova N."/>
            <person name="Karamychev V."/>
            <person name="Polouchine N."/>
            <person name="Shakhova V."/>
            <person name="Grigoriev I."/>
            <person name="Lou Y."/>
            <person name="Rohksar D."/>
            <person name="Lucas S."/>
            <person name="Huang K."/>
            <person name="Goodstein D.M."/>
            <person name="Hawkins T."/>
            <person name="Plengvidhya V."/>
            <person name="Welker D."/>
            <person name="Hughes J."/>
            <person name="Goh Y."/>
            <person name="Benson A."/>
            <person name="Baldwin K."/>
            <person name="Lee J.-H."/>
            <person name="Diaz-Muniz I."/>
            <person name="Dosti B."/>
            <person name="Smeianov V."/>
            <person name="Wechter W."/>
            <person name="Barabote R."/>
            <person name="Lorca G."/>
            <person name="Altermann E."/>
            <person name="Barrangou R."/>
            <person name="Ganesan B."/>
            <person name="Xie Y."/>
            <person name="Rawsthorne H."/>
            <person name="Tamir D."/>
            <person name="Parker C."/>
            <person name="Breidt F."/>
            <person name="Broadbent J.R."/>
            <person name="Hutkins R."/>
            <person name="O'Sullivan D."/>
            <person name="Steele J."/>
            <person name="Unlu G."/>
            <person name="Saier M.H. Jr."/>
            <person name="Klaenhammer T."/>
            <person name="Richardson P."/>
            <person name="Kozyavkin S."/>
            <person name="Weimer B.C."/>
            <person name="Mills D.A."/>
        </authorList>
    </citation>
    <scope>NUCLEOTIDE SEQUENCE [LARGE SCALE GENOMIC DNA]</scope>
    <source>
        <strain>ATCC 8293 / DSM 20343 / BCRC 11652 / CCM 1803 / JCM 6124 / NCDO 523 / NBRC 100496 / NCIMB 8023 / NCTC 12954 / NRRL B-1118 / 37Y</strain>
    </source>
</reference>
<name>RS11_LEUMM</name>